<keyword id="KW-0378">Hydrolase</keyword>
<keyword id="KW-0507">mRNA processing</keyword>
<keyword id="KW-0539">Nucleus</keyword>
<keyword id="KW-0904">Protein phosphatase</keyword>
<keyword id="KW-1185">Reference proteome</keyword>
<proteinExistence type="inferred from homology"/>
<comment type="function">
    <text evidence="1">Protein phosphatase that catalyzes the dephosphorylation of the C-terminal domain of RNA polymerase II. Plays a role in RNA processing and termination.</text>
</comment>
<comment type="catalytic activity">
    <reaction evidence="1">
        <text>O-phospho-L-seryl-[protein] + H2O = L-seryl-[protein] + phosphate</text>
        <dbReference type="Rhea" id="RHEA:20629"/>
        <dbReference type="Rhea" id="RHEA-COMP:9863"/>
        <dbReference type="Rhea" id="RHEA-COMP:11604"/>
        <dbReference type="ChEBI" id="CHEBI:15377"/>
        <dbReference type="ChEBI" id="CHEBI:29999"/>
        <dbReference type="ChEBI" id="CHEBI:43474"/>
        <dbReference type="ChEBI" id="CHEBI:83421"/>
        <dbReference type="EC" id="3.1.3.16"/>
    </reaction>
</comment>
<comment type="catalytic activity">
    <reaction evidence="1">
        <text>O-phospho-L-threonyl-[protein] + H2O = L-threonyl-[protein] + phosphate</text>
        <dbReference type="Rhea" id="RHEA:47004"/>
        <dbReference type="Rhea" id="RHEA-COMP:11060"/>
        <dbReference type="Rhea" id="RHEA-COMP:11605"/>
        <dbReference type="ChEBI" id="CHEBI:15377"/>
        <dbReference type="ChEBI" id="CHEBI:30013"/>
        <dbReference type="ChEBI" id="CHEBI:43474"/>
        <dbReference type="ChEBI" id="CHEBI:61977"/>
        <dbReference type="EC" id="3.1.3.16"/>
    </reaction>
</comment>
<comment type="subcellular location">
    <subcellularLocation>
        <location evidence="1">Nucleus</location>
    </subcellularLocation>
</comment>
<comment type="similarity">
    <text evidence="2">Belongs to the SSU72 phosphatase family.</text>
</comment>
<protein>
    <recommendedName>
        <fullName evidence="2">RNA polymerase II subunit A C-terminal domain phosphatase SSU72 like protein 6</fullName>
    </recommendedName>
    <alternativeName>
        <fullName evidence="2">RNA polymerase II subunit A C-terminal domain phosphatase SSU72L6</fullName>
        <shortName>CTD phosphatase SSU72L6</shortName>
        <ecNumber evidence="1">3.1.3.16</ecNumber>
    </alternativeName>
</protein>
<name>S72L6_HUMAN</name>
<feature type="chain" id="PRO_0000457675" description="RNA polymerase II subunit A C-terminal domain phosphatase SSU72 like protein 6">
    <location>
        <begin position="1"/>
        <end position="194"/>
    </location>
</feature>
<reference key="1">
    <citation type="journal article" date="2003" name="Nature">
        <title>The DNA sequence of human chromosome 7.</title>
        <authorList>
            <person name="Hillier L.W."/>
            <person name="Fulton R.S."/>
            <person name="Fulton L.A."/>
            <person name="Graves T.A."/>
            <person name="Pepin K.H."/>
            <person name="Wagner-McPherson C."/>
            <person name="Layman D."/>
            <person name="Maas J."/>
            <person name="Jaeger S."/>
            <person name="Walker R."/>
            <person name="Wylie K."/>
            <person name="Sekhon M."/>
            <person name="Becker M.C."/>
            <person name="O'Laughlin M.D."/>
            <person name="Schaller M.E."/>
            <person name="Fewell G.A."/>
            <person name="Delehaunty K.D."/>
            <person name="Miner T.L."/>
            <person name="Nash W.E."/>
            <person name="Cordes M."/>
            <person name="Du H."/>
            <person name="Sun H."/>
            <person name="Edwards J."/>
            <person name="Bradshaw-Cordum H."/>
            <person name="Ali J."/>
            <person name="Andrews S."/>
            <person name="Isak A."/>
            <person name="Vanbrunt A."/>
            <person name="Nguyen C."/>
            <person name="Du F."/>
            <person name="Lamar B."/>
            <person name="Courtney L."/>
            <person name="Kalicki J."/>
            <person name="Ozersky P."/>
            <person name="Bielicki L."/>
            <person name="Scott K."/>
            <person name="Holmes A."/>
            <person name="Harkins R."/>
            <person name="Harris A."/>
            <person name="Strong C.M."/>
            <person name="Hou S."/>
            <person name="Tomlinson C."/>
            <person name="Dauphin-Kohlberg S."/>
            <person name="Kozlowicz-Reilly A."/>
            <person name="Leonard S."/>
            <person name="Rohlfing T."/>
            <person name="Rock S.M."/>
            <person name="Tin-Wollam A.-M."/>
            <person name="Abbott A."/>
            <person name="Minx P."/>
            <person name="Maupin R."/>
            <person name="Strowmatt C."/>
            <person name="Latreille P."/>
            <person name="Miller N."/>
            <person name="Johnson D."/>
            <person name="Murray J."/>
            <person name="Woessner J.P."/>
            <person name="Wendl M.C."/>
            <person name="Yang S.-P."/>
            <person name="Schultz B.R."/>
            <person name="Wallis J.W."/>
            <person name="Spieth J."/>
            <person name="Bieri T.A."/>
            <person name="Nelson J.O."/>
            <person name="Berkowicz N."/>
            <person name="Wohldmann P.E."/>
            <person name="Cook L.L."/>
            <person name="Hickenbotham M.T."/>
            <person name="Eldred J."/>
            <person name="Williams D."/>
            <person name="Bedell J.A."/>
            <person name="Mardis E.R."/>
            <person name="Clifton S.W."/>
            <person name="Chissoe S.L."/>
            <person name="Marra M.A."/>
            <person name="Raymond C."/>
            <person name="Haugen E."/>
            <person name="Gillett W."/>
            <person name="Zhou Y."/>
            <person name="James R."/>
            <person name="Phelps K."/>
            <person name="Iadanoto S."/>
            <person name="Bubb K."/>
            <person name="Simms E."/>
            <person name="Levy R."/>
            <person name="Clendenning J."/>
            <person name="Kaul R."/>
            <person name="Kent W.J."/>
            <person name="Furey T.S."/>
            <person name="Baertsch R.A."/>
            <person name="Brent M.R."/>
            <person name="Keibler E."/>
            <person name="Flicek P."/>
            <person name="Bork P."/>
            <person name="Suyama M."/>
            <person name="Bailey J.A."/>
            <person name="Portnoy M.E."/>
            <person name="Torrents D."/>
            <person name="Chinwalla A.T."/>
            <person name="Gish W.R."/>
            <person name="Eddy S.R."/>
            <person name="McPherson J.D."/>
            <person name="Olson M.V."/>
            <person name="Eichler E.E."/>
            <person name="Green E.D."/>
            <person name="Waterston R.H."/>
            <person name="Wilson R.K."/>
        </authorList>
    </citation>
    <scope>NUCLEOTIDE SEQUENCE [LARGE SCALE GENOMIC DNA]</scope>
</reference>
<evidence type="ECO:0000250" key="1">
    <source>
        <dbReference type="UniProtKB" id="Q9NP77"/>
    </source>
</evidence>
<evidence type="ECO:0000305" key="2"/>
<evidence type="ECO:0000312" key="3">
    <source>
        <dbReference type="HGNC" id="HGNC:43627"/>
    </source>
</evidence>
<dbReference type="EC" id="3.1.3.16" evidence="1"/>
<dbReference type="EMBL" id="AC005521">
    <property type="status" value="NOT_ANNOTATED_CDS"/>
    <property type="molecule type" value="Genomic_DNA"/>
</dbReference>
<dbReference type="EMBL" id="KF458590">
    <property type="status" value="NOT_ANNOTATED_CDS"/>
    <property type="molecule type" value="Genomic_DNA"/>
</dbReference>
<dbReference type="RefSeq" id="NP_001400933.1">
    <property type="nucleotide sequence ID" value="NM_001414004.1"/>
</dbReference>
<dbReference type="SMR" id="A0A1W2PR75"/>
<dbReference type="FunCoup" id="A0A1W2PR75">
    <property type="interactions" value="79"/>
</dbReference>
<dbReference type="STRING" id="9606.ENSP00000492512"/>
<dbReference type="BioMuta" id="SSU72P8"/>
<dbReference type="MassIVE" id="A0A1W2PR75"/>
<dbReference type="PeptideAtlas" id="A0A1W2PR75"/>
<dbReference type="Ensembl" id="ENST00000473520.2">
    <property type="protein sequence ID" value="ENSP00000492512.1"/>
    <property type="gene ID" value="ENSG00000230268.4"/>
</dbReference>
<dbReference type="GeneID" id="136157"/>
<dbReference type="MANE-Select" id="ENST00000473520.2">
    <property type="protein sequence ID" value="ENSP00000492512.1"/>
    <property type="RefSeq nucleotide sequence ID" value="NM_001414004.1"/>
    <property type="RefSeq protein sequence ID" value="NP_001400933.1"/>
</dbReference>
<dbReference type="AGR" id="HGNC:43627"/>
<dbReference type="GeneCards" id="SSU72L6"/>
<dbReference type="HGNC" id="HGNC:43627">
    <property type="gene designation" value="SSU72L6"/>
</dbReference>
<dbReference type="OpenTargets" id="ENSG00000230268"/>
<dbReference type="VEuPathDB" id="HostDB:ENSG00000230268"/>
<dbReference type="GeneTree" id="ENSGT00390000010165"/>
<dbReference type="InParanoid" id="A0A1W2PR75"/>
<dbReference type="OMA" id="TQPNVYQ"/>
<dbReference type="OrthoDB" id="9552019at2759"/>
<dbReference type="PAN-GO" id="A0A1W2PR75">
    <property type="GO annotations" value="5 GO annotations based on evolutionary models"/>
</dbReference>
<dbReference type="PRO" id="PR:A0A1W2PR75"/>
<dbReference type="Proteomes" id="UP000005640">
    <property type="component" value="Chromosome 7"/>
</dbReference>
<dbReference type="RNAct" id="A0A1W2PR75">
    <property type="molecule type" value="protein"/>
</dbReference>
<dbReference type="Bgee" id="ENSG00000230268">
    <property type="expression patterns" value="Expressed in primordial germ cell in gonad and 6 other cell types or tissues"/>
</dbReference>
<dbReference type="GO" id="GO:0005847">
    <property type="term" value="C:mRNA cleavage and polyadenylation specificity factor complex"/>
    <property type="evidence" value="ECO:0000318"/>
    <property type="project" value="GO_Central"/>
</dbReference>
<dbReference type="GO" id="GO:0008420">
    <property type="term" value="F:RNA polymerase II CTD heptapeptide repeat phosphatase activity"/>
    <property type="evidence" value="ECO:0000318"/>
    <property type="project" value="GO_Central"/>
</dbReference>
<dbReference type="GO" id="GO:0006397">
    <property type="term" value="P:mRNA processing"/>
    <property type="evidence" value="ECO:0007669"/>
    <property type="project" value="UniProtKB-KW"/>
</dbReference>
<dbReference type="GO" id="GO:0006369">
    <property type="term" value="P:termination of RNA polymerase II transcription"/>
    <property type="evidence" value="ECO:0000318"/>
    <property type="project" value="GO_Central"/>
</dbReference>
<dbReference type="FunFam" id="3.40.50.2300:FF:000039">
    <property type="entry name" value="RNA polymerase II subunit A C-terminal domain phosphatase"/>
    <property type="match status" value="1"/>
</dbReference>
<dbReference type="FunFam" id="3.40.50.2300:FF:000066">
    <property type="entry name" value="RNA polymerase II subunit A C-terminal domain phosphatase SSU72"/>
    <property type="match status" value="1"/>
</dbReference>
<dbReference type="Gene3D" id="3.40.50.2300">
    <property type="match status" value="2"/>
</dbReference>
<dbReference type="InterPro" id="IPR036196">
    <property type="entry name" value="Ptyr_pPase_sf"/>
</dbReference>
<dbReference type="InterPro" id="IPR006811">
    <property type="entry name" value="RNA_pol_II_suA"/>
</dbReference>
<dbReference type="PANTHER" id="PTHR20383">
    <property type="entry name" value="RNA POLYMERASE II SUBUNIT A C-TERMINAL DOMAIN PHOSPHATASE"/>
    <property type="match status" value="1"/>
</dbReference>
<dbReference type="Pfam" id="PF04722">
    <property type="entry name" value="Ssu72"/>
    <property type="match status" value="1"/>
</dbReference>
<dbReference type="SUPFAM" id="SSF52788">
    <property type="entry name" value="Phosphotyrosine protein phosphatases I"/>
    <property type="match status" value="1"/>
</dbReference>
<sequence length="194" mass="22485">MLSSPLRVAVVCVSNINRSMEAHSILRRKGLSVRSFGTESHVRLPGRRPNHPVVYDFATTYKEMYNDLLRKDRECYTHNGILHILGRNERIKPGPERFQECTEFFDVIFTCEERVYDTVVEDLCSREQQTFQPVHVINMDIKDTLEGAILGAFLICEICQCLQQSDDMEDSLEELLLQMEEKAGKSFLHTVCFY</sequence>
<accession>A0A1W2PR75</accession>
<gene>
    <name evidence="3" type="primary">SSU72L6</name>
</gene>
<organism>
    <name type="scientific">Homo sapiens</name>
    <name type="common">Human</name>
    <dbReference type="NCBI Taxonomy" id="9606"/>
    <lineage>
        <taxon>Eukaryota</taxon>
        <taxon>Metazoa</taxon>
        <taxon>Chordata</taxon>
        <taxon>Craniata</taxon>
        <taxon>Vertebrata</taxon>
        <taxon>Euteleostomi</taxon>
        <taxon>Mammalia</taxon>
        <taxon>Eutheria</taxon>
        <taxon>Euarchontoglires</taxon>
        <taxon>Primates</taxon>
        <taxon>Haplorrhini</taxon>
        <taxon>Catarrhini</taxon>
        <taxon>Hominidae</taxon>
        <taxon>Homo</taxon>
    </lineage>
</organism>